<sequence>MKVLEGAVAAPNAKIAVVIARFNSFINESLLEGALDALKRLGQVKEENITLVRVPGAYELPLVARRLAESKKYDGIVALGTVIRGGTAHFEYVAGEASSGLGQVAMNADIPVAFGVLTTENIEQAIERAGTKAGNKGAEAALVALEMVNLLAQIDAA</sequence>
<gene>
    <name evidence="1" type="primary">ribH</name>
    <name type="ordered locus">PM0731</name>
</gene>
<dbReference type="EC" id="2.5.1.78" evidence="1"/>
<dbReference type="EMBL" id="AE004439">
    <property type="protein sequence ID" value="AAK02815.1"/>
    <property type="molecule type" value="Genomic_DNA"/>
</dbReference>
<dbReference type="SMR" id="P57869"/>
<dbReference type="STRING" id="272843.PM0731"/>
<dbReference type="EnsemblBacteria" id="AAK02815">
    <property type="protein sequence ID" value="AAK02815"/>
    <property type="gene ID" value="PM0731"/>
</dbReference>
<dbReference type="KEGG" id="pmu:PM0731"/>
<dbReference type="HOGENOM" id="CLU_089358_1_1_6"/>
<dbReference type="OrthoDB" id="9809709at2"/>
<dbReference type="BRENDA" id="2.5.1.78">
    <property type="organism ID" value="4558"/>
</dbReference>
<dbReference type="UniPathway" id="UPA00275">
    <property type="reaction ID" value="UER00404"/>
</dbReference>
<dbReference type="Proteomes" id="UP000000809">
    <property type="component" value="Chromosome"/>
</dbReference>
<dbReference type="GO" id="GO:0005829">
    <property type="term" value="C:cytosol"/>
    <property type="evidence" value="ECO:0007669"/>
    <property type="project" value="TreeGrafter"/>
</dbReference>
<dbReference type="GO" id="GO:0009349">
    <property type="term" value="C:riboflavin synthase complex"/>
    <property type="evidence" value="ECO:0007669"/>
    <property type="project" value="InterPro"/>
</dbReference>
<dbReference type="GO" id="GO:0000906">
    <property type="term" value="F:6,7-dimethyl-8-ribityllumazine synthase activity"/>
    <property type="evidence" value="ECO:0007669"/>
    <property type="project" value="UniProtKB-UniRule"/>
</dbReference>
<dbReference type="GO" id="GO:0009231">
    <property type="term" value="P:riboflavin biosynthetic process"/>
    <property type="evidence" value="ECO:0007669"/>
    <property type="project" value="UniProtKB-UniRule"/>
</dbReference>
<dbReference type="CDD" id="cd09209">
    <property type="entry name" value="Lumazine_synthase-I"/>
    <property type="match status" value="1"/>
</dbReference>
<dbReference type="FunFam" id="3.40.50.960:FF:000001">
    <property type="entry name" value="6,7-dimethyl-8-ribityllumazine synthase"/>
    <property type="match status" value="1"/>
</dbReference>
<dbReference type="Gene3D" id="3.40.50.960">
    <property type="entry name" value="Lumazine/riboflavin synthase"/>
    <property type="match status" value="1"/>
</dbReference>
<dbReference type="HAMAP" id="MF_00178">
    <property type="entry name" value="Lumazine_synth"/>
    <property type="match status" value="1"/>
</dbReference>
<dbReference type="InterPro" id="IPR034964">
    <property type="entry name" value="LS"/>
</dbReference>
<dbReference type="InterPro" id="IPR002180">
    <property type="entry name" value="LS/RS"/>
</dbReference>
<dbReference type="InterPro" id="IPR036467">
    <property type="entry name" value="LS/RS_sf"/>
</dbReference>
<dbReference type="NCBIfam" id="TIGR00114">
    <property type="entry name" value="lumazine-synth"/>
    <property type="match status" value="1"/>
</dbReference>
<dbReference type="NCBIfam" id="NF000812">
    <property type="entry name" value="PRK00061.1-4"/>
    <property type="match status" value="1"/>
</dbReference>
<dbReference type="PANTHER" id="PTHR21058:SF0">
    <property type="entry name" value="6,7-DIMETHYL-8-RIBITYLLUMAZINE SYNTHASE"/>
    <property type="match status" value="1"/>
</dbReference>
<dbReference type="PANTHER" id="PTHR21058">
    <property type="entry name" value="6,7-DIMETHYL-8-RIBITYLLUMAZINE SYNTHASE DMRL SYNTHASE LUMAZINE SYNTHASE"/>
    <property type="match status" value="1"/>
</dbReference>
<dbReference type="Pfam" id="PF00885">
    <property type="entry name" value="DMRL_synthase"/>
    <property type="match status" value="1"/>
</dbReference>
<dbReference type="SUPFAM" id="SSF52121">
    <property type="entry name" value="Lumazine synthase"/>
    <property type="match status" value="1"/>
</dbReference>
<reference key="1">
    <citation type="journal article" date="2001" name="Proc. Natl. Acad. Sci. U.S.A.">
        <title>Complete genomic sequence of Pasteurella multocida Pm70.</title>
        <authorList>
            <person name="May B.J."/>
            <person name="Zhang Q."/>
            <person name="Li L.L."/>
            <person name="Paustian M.L."/>
            <person name="Whittam T.S."/>
            <person name="Kapur V."/>
        </authorList>
    </citation>
    <scope>NUCLEOTIDE SEQUENCE [LARGE SCALE GENOMIC DNA]</scope>
    <source>
        <strain>Pm70</strain>
    </source>
</reference>
<organism>
    <name type="scientific">Pasteurella multocida (strain Pm70)</name>
    <dbReference type="NCBI Taxonomy" id="272843"/>
    <lineage>
        <taxon>Bacteria</taxon>
        <taxon>Pseudomonadati</taxon>
        <taxon>Pseudomonadota</taxon>
        <taxon>Gammaproteobacteria</taxon>
        <taxon>Pasteurellales</taxon>
        <taxon>Pasteurellaceae</taxon>
        <taxon>Pasteurella</taxon>
    </lineage>
</organism>
<keyword id="KW-1185">Reference proteome</keyword>
<keyword id="KW-0686">Riboflavin biosynthesis</keyword>
<keyword id="KW-0808">Transferase</keyword>
<feature type="chain" id="PRO_0000134778" description="6,7-dimethyl-8-ribityllumazine synthase">
    <location>
        <begin position="1"/>
        <end position="157"/>
    </location>
</feature>
<feature type="active site" description="Proton donor" evidence="1">
    <location>
        <position position="89"/>
    </location>
</feature>
<feature type="binding site" evidence="1">
    <location>
        <position position="22"/>
    </location>
    <ligand>
        <name>5-amino-6-(D-ribitylamino)uracil</name>
        <dbReference type="ChEBI" id="CHEBI:15934"/>
    </ligand>
</feature>
<feature type="binding site" evidence="1">
    <location>
        <begin position="57"/>
        <end position="59"/>
    </location>
    <ligand>
        <name>5-amino-6-(D-ribitylamino)uracil</name>
        <dbReference type="ChEBI" id="CHEBI:15934"/>
    </ligand>
</feature>
<feature type="binding site" evidence="1">
    <location>
        <begin position="81"/>
        <end position="83"/>
    </location>
    <ligand>
        <name>5-amino-6-(D-ribitylamino)uracil</name>
        <dbReference type="ChEBI" id="CHEBI:15934"/>
    </ligand>
</feature>
<feature type="binding site" evidence="1">
    <location>
        <begin position="86"/>
        <end position="87"/>
    </location>
    <ligand>
        <name>(2S)-2-hydroxy-3-oxobutyl phosphate</name>
        <dbReference type="ChEBI" id="CHEBI:58830"/>
    </ligand>
</feature>
<feature type="binding site" evidence="1">
    <location>
        <position position="114"/>
    </location>
    <ligand>
        <name>5-amino-6-(D-ribitylamino)uracil</name>
        <dbReference type="ChEBI" id="CHEBI:15934"/>
    </ligand>
</feature>
<feature type="binding site" evidence="1">
    <location>
        <position position="128"/>
    </location>
    <ligand>
        <name>(2S)-2-hydroxy-3-oxobutyl phosphate</name>
        <dbReference type="ChEBI" id="CHEBI:58830"/>
    </ligand>
</feature>
<evidence type="ECO:0000255" key="1">
    <source>
        <dbReference type="HAMAP-Rule" id="MF_00178"/>
    </source>
</evidence>
<accession>P57869</accession>
<proteinExistence type="inferred from homology"/>
<comment type="function">
    <text evidence="1">Catalyzes the formation of 6,7-dimethyl-8-ribityllumazine by condensation of 5-amino-6-(D-ribitylamino)uracil with 3,4-dihydroxy-2-butanone 4-phosphate. This is the penultimate step in the biosynthesis of riboflavin.</text>
</comment>
<comment type="catalytic activity">
    <reaction evidence="1">
        <text>(2S)-2-hydroxy-3-oxobutyl phosphate + 5-amino-6-(D-ribitylamino)uracil = 6,7-dimethyl-8-(1-D-ribityl)lumazine + phosphate + 2 H2O + H(+)</text>
        <dbReference type="Rhea" id="RHEA:26152"/>
        <dbReference type="ChEBI" id="CHEBI:15377"/>
        <dbReference type="ChEBI" id="CHEBI:15378"/>
        <dbReference type="ChEBI" id="CHEBI:15934"/>
        <dbReference type="ChEBI" id="CHEBI:43474"/>
        <dbReference type="ChEBI" id="CHEBI:58201"/>
        <dbReference type="ChEBI" id="CHEBI:58830"/>
        <dbReference type="EC" id="2.5.1.78"/>
    </reaction>
</comment>
<comment type="pathway">
    <text evidence="1">Cofactor biosynthesis; riboflavin biosynthesis; riboflavin from 2-hydroxy-3-oxobutyl phosphate and 5-amino-6-(D-ribitylamino)uracil: step 1/2.</text>
</comment>
<comment type="subunit">
    <text evidence="1">Forms an icosahedral capsid composed of 60 subunits, arranged as a dodecamer of pentamers.</text>
</comment>
<comment type="similarity">
    <text evidence="1">Belongs to the DMRL synthase family.</text>
</comment>
<name>RISB_PASMU</name>
<protein>
    <recommendedName>
        <fullName evidence="1">6,7-dimethyl-8-ribityllumazine synthase</fullName>
        <shortName evidence="1">DMRL synthase</shortName>
        <shortName evidence="1">LS</shortName>
        <shortName evidence="1">Lumazine synthase</shortName>
        <ecNumber evidence="1">2.5.1.78</ecNumber>
    </recommendedName>
</protein>